<dbReference type="EMBL" id="BX294146">
    <property type="protein sequence ID" value="CAD75609.1"/>
    <property type="molecule type" value="Genomic_DNA"/>
</dbReference>
<dbReference type="RefSeq" id="NP_868062.1">
    <property type="nucleotide sequence ID" value="NC_005027.1"/>
</dbReference>
<dbReference type="RefSeq" id="WP_007326806.1">
    <property type="nucleotide sequence ID" value="NC_005027.1"/>
</dbReference>
<dbReference type="SMR" id="Q7UN10"/>
<dbReference type="FunCoup" id="Q7UN10">
    <property type="interactions" value="563"/>
</dbReference>
<dbReference type="STRING" id="243090.RB7850"/>
<dbReference type="EnsemblBacteria" id="CAD75609">
    <property type="protein sequence ID" value="CAD75609"/>
    <property type="gene ID" value="RB7850"/>
</dbReference>
<dbReference type="GeneID" id="90608447"/>
<dbReference type="KEGG" id="rba:RB7850"/>
<dbReference type="PATRIC" id="fig|243090.15.peg.3793"/>
<dbReference type="eggNOG" id="COG0093">
    <property type="taxonomic scope" value="Bacteria"/>
</dbReference>
<dbReference type="HOGENOM" id="CLU_095071_2_1_0"/>
<dbReference type="InParanoid" id="Q7UN10"/>
<dbReference type="OrthoDB" id="9806379at2"/>
<dbReference type="Proteomes" id="UP000001025">
    <property type="component" value="Chromosome"/>
</dbReference>
<dbReference type="GO" id="GO:0022625">
    <property type="term" value="C:cytosolic large ribosomal subunit"/>
    <property type="evidence" value="ECO:0000318"/>
    <property type="project" value="GO_Central"/>
</dbReference>
<dbReference type="GO" id="GO:0070180">
    <property type="term" value="F:large ribosomal subunit rRNA binding"/>
    <property type="evidence" value="ECO:0000318"/>
    <property type="project" value="GO_Central"/>
</dbReference>
<dbReference type="GO" id="GO:0003735">
    <property type="term" value="F:structural constituent of ribosome"/>
    <property type="evidence" value="ECO:0000318"/>
    <property type="project" value="GO_Central"/>
</dbReference>
<dbReference type="GO" id="GO:0006412">
    <property type="term" value="P:translation"/>
    <property type="evidence" value="ECO:0007669"/>
    <property type="project" value="UniProtKB-UniRule"/>
</dbReference>
<dbReference type="CDD" id="cd00337">
    <property type="entry name" value="Ribosomal_uL14"/>
    <property type="match status" value="1"/>
</dbReference>
<dbReference type="FunFam" id="2.40.150.20:FF:000001">
    <property type="entry name" value="50S ribosomal protein L14"/>
    <property type="match status" value="1"/>
</dbReference>
<dbReference type="Gene3D" id="2.40.150.20">
    <property type="entry name" value="Ribosomal protein L14"/>
    <property type="match status" value="1"/>
</dbReference>
<dbReference type="HAMAP" id="MF_01367">
    <property type="entry name" value="Ribosomal_uL14"/>
    <property type="match status" value="1"/>
</dbReference>
<dbReference type="InterPro" id="IPR000218">
    <property type="entry name" value="Ribosomal_uL14"/>
</dbReference>
<dbReference type="InterPro" id="IPR005745">
    <property type="entry name" value="Ribosomal_uL14_bac-type"/>
</dbReference>
<dbReference type="InterPro" id="IPR019972">
    <property type="entry name" value="Ribosomal_uL14_CS"/>
</dbReference>
<dbReference type="InterPro" id="IPR036853">
    <property type="entry name" value="Ribosomal_uL14_sf"/>
</dbReference>
<dbReference type="NCBIfam" id="TIGR01067">
    <property type="entry name" value="rplN_bact"/>
    <property type="match status" value="1"/>
</dbReference>
<dbReference type="PANTHER" id="PTHR11761">
    <property type="entry name" value="50S/60S RIBOSOMAL PROTEIN L14/L23"/>
    <property type="match status" value="1"/>
</dbReference>
<dbReference type="PANTHER" id="PTHR11761:SF3">
    <property type="entry name" value="LARGE RIBOSOMAL SUBUNIT PROTEIN UL14M"/>
    <property type="match status" value="1"/>
</dbReference>
<dbReference type="Pfam" id="PF00238">
    <property type="entry name" value="Ribosomal_L14"/>
    <property type="match status" value="1"/>
</dbReference>
<dbReference type="SMART" id="SM01374">
    <property type="entry name" value="Ribosomal_L14"/>
    <property type="match status" value="1"/>
</dbReference>
<dbReference type="SUPFAM" id="SSF50193">
    <property type="entry name" value="Ribosomal protein L14"/>
    <property type="match status" value="1"/>
</dbReference>
<dbReference type="PROSITE" id="PS00049">
    <property type="entry name" value="RIBOSOMAL_L14"/>
    <property type="match status" value="1"/>
</dbReference>
<gene>
    <name evidence="1" type="primary">rplN</name>
    <name type="ordered locus">RB7850</name>
</gene>
<proteinExistence type="inferred from homology"/>
<accession>Q7UN10</accession>
<evidence type="ECO:0000255" key="1">
    <source>
        <dbReference type="HAMAP-Rule" id="MF_01367"/>
    </source>
</evidence>
<evidence type="ECO:0000305" key="2"/>
<protein>
    <recommendedName>
        <fullName evidence="1">Large ribosomal subunit protein uL14</fullName>
    </recommendedName>
    <alternativeName>
        <fullName evidence="2">50S ribosomal protein L14</fullName>
    </alternativeName>
</protein>
<name>RL14_RHOBA</name>
<sequence length="122" mass="13526">MIQQESRLDVADNTGAREVMCIKVLGGSRRRFATVGDVIVCSVKSVIPGSEVKKKAVVRAVIVRVKQPTRRPDGSYIRFDSNAVVLVDKDRNPRGTRIFGAVARELRENNFMKIVSLANEVV</sequence>
<comment type="function">
    <text evidence="1">Binds to 23S rRNA. Forms part of two intersubunit bridges in the 70S ribosome.</text>
</comment>
<comment type="subunit">
    <text evidence="1">Part of the 50S ribosomal subunit. Forms a cluster with proteins L3 and L19. In the 70S ribosome, L14 and L19 interact and together make contacts with the 16S rRNA in bridges B5 and B8.</text>
</comment>
<comment type="similarity">
    <text evidence="1">Belongs to the universal ribosomal protein uL14 family.</text>
</comment>
<reference key="1">
    <citation type="journal article" date="2003" name="Proc. Natl. Acad. Sci. U.S.A.">
        <title>Complete genome sequence of the marine planctomycete Pirellula sp. strain 1.</title>
        <authorList>
            <person name="Gloeckner F.O."/>
            <person name="Kube M."/>
            <person name="Bauer M."/>
            <person name="Teeling H."/>
            <person name="Lombardot T."/>
            <person name="Ludwig W."/>
            <person name="Gade D."/>
            <person name="Beck A."/>
            <person name="Borzym K."/>
            <person name="Heitmann K."/>
            <person name="Rabus R."/>
            <person name="Schlesner H."/>
            <person name="Amann R."/>
            <person name="Reinhardt R."/>
        </authorList>
    </citation>
    <scope>NUCLEOTIDE SEQUENCE [LARGE SCALE GENOMIC DNA]</scope>
    <source>
        <strain>DSM 10527 / NCIMB 13988 / SH1</strain>
    </source>
</reference>
<keyword id="KW-1185">Reference proteome</keyword>
<keyword id="KW-0687">Ribonucleoprotein</keyword>
<keyword id="KW-0689">Ribosomal protein</keyword>
<keyword id="KW-0694">RNA-binding</keyword>
<keyword id="KW-0699">rRNA-binding</keyword>
<organism>
    <name type="scientific">Rhodopirellula baltica (strain DSM 10527 / NCIMB 13988 / SH1)</name>
    <dbReference type="NCBI Taxonomy" id="243090"/>
    <lineage>
        <taxon>Bacteria</taxon>
        <taxon>Pseudomonadati</taxon>
        <taxon>Planctomycetota</taxon>
        <taxon>Planctomycetia</taxon>
        <taxon>Pirellulales</taxon>
        <taxon>Pirellulaceae</taxon>
        <taxon>Rhodopirellula</taxon>
    </lineage>
</organism>
<feature type="chain" id="PRO_1000055685" description="Large ribosomal subunit protein uL14">
    <location>
        <begin position="1"/>
        <end position="122"/>
    </location>
</feature>